<evidence type="ECO:0000255" key="1">
    <source>
        <dbReference type="HAMAP-Rule" id="MF_01052"/>
    </source>
</evidence>
<gene>
    <name evidence="1" type="primary">caiA</name>
    <name type="ordered locus">c0048</name>
</gene>
<reference key="1">
    <citation type="journal article" date="2002" name="Proc. Natl. Acad. Sci. U.S.A.">
        <title>Extensive mosaic structure revealed by the complete genome sequence of uropathogenic Escherichia coli.</title>
        <authorList>
            <person name="Welch R.A."/>
            <person name="Burland V."/>
            <person name="Plunkett G. III"/>
            <person name="Redford P."/>
            <person name="Roesch P."/>
            <person name="Rasko D."/>
            <person name="Buckles E.L."/>
            <person name="Liou S.-R."/>
            <person name="Boutin A."/>
            <person name="Hackett J."/>
            <person name="Stroud D."/>
            <person name="Mayhew G.F."/>
            <person name="Rose D.J."/>
            <person name="Zhou S."/>
            <person name="Schwartz D.C."/>
            <person name="Perna N.T."/>
            <person name="Mobley H.L.T."/>
            <person name="Donnenberg M.S."/>
            <person name="Blattner F.R."/>
        </authorList>
    </citation>
    <scope>NUCLEOTIDE SEQUENCE [LARGE SCALE GENOMIC DNA]</scope>
    <source>
        <strain>CFT073 / ATCC 700928 / UPEC</strain>
    </source>
</reference>
<sequence length="380" mass="42558">MDFNLNDEQELFVAGIRELMASENWEAYFAECDRDSVYPERFVKALADMGIDSLLIPEEHGGLDAGFVTLAAVWMELGRLGAPTYVLYQLPGGFNTFLREGTQEQIDKIMAFRGTGKQMWNSAITEPGAGSDVGSLKTTYTRRNGKIYLNGSKCFITSSAYTPYIVVMARDGASPDKPVYTEWFVDMSKPGIKVTKLEKLGLRMDSCCEITFDDVELDEKDMFGREGNGFNRVKEEFDHERFLVALTNYGTAMCAFEDAARYANQRVQFGEAIGRFQLIQEKFAHMAIKLNSMKNMLYEAAWKADNGTITSGDAAMCKYFCANAAFEVVDSAMQVLGGVGIAGNHRISRFWRDLRVDRVSGGSDEMQILTLGRAVLKQYR</sequence>
<keyword id="KW-0963">Cytoplasm</keyword>
<keyword id="KW-0274">FAD</keyword>
<keyword id="KW-0285">Flavoprotein</keyword>
<keyword id="KW-0560">Oxidoreductase</keyword>
<keyword id="KW-1185">Reference proteome</keyword>
<feature type="chain" id="PRO_0000201194" description="Crotonobetainyl-CoA reductase">
    <location>
        <begin position="1"/>
        <end position="380"/>
    </location>
</feature>
<name>CAIA_ECOL6</name>
<comment type="function">
    <text evidence="1">Catalyzes the reduction of crotonobetainyl-CoA to gamma-butyrobetainyl-CoA.</text>
</comment>
<comment type="catalytic activity">
    <reaction evidence="1">
        <text>4-(trimethylamino)butanoyl-CoA + oxidized [electron-transfer flavoprotein] + H(+) = crotonobetainyl-CoA + reduced [electron-transfer flavoprotein]</text>
        <dbReference type="Rhea" id="RHEA:51584"/>
        <dbReference type="Rhea" id="RHEA-COMP:10685"/>
        <dbReference type="Rhea" id="RHEA-COMP:10686"/>
        <dbReference type="ChEBI" id="CHEBI:15378"/>
        <dbReference type="ChEBI" id="CHEBI:57692"/>
        <dbReference type="ChEBI" id="CHEBI:58307"/>
        <dbReference type="ChEBI" id="CHEBI:60933"/>
        <dbReference type="ChEBI" id="CHEBI:61513"/>
        <dbReference type="EC" id="1.3.8.13"/>
    </reaction>
</comment>
<comment type="cofactor">
    <cofactor evidence="1">
        <name>FAD</name>
        <dbReference type="ChEBI" id="CHEBI:57692"/>
    </cofactor>
</comment>
<comment type="pathway">
    <text evidence="1">Amine and polyamine metabolism; carnitine metabolism.</text>
</comment>
<comment type="subunit">
    <text evidence="1">Homotetramer.</text>
</comment>
<comment type="subcellular location">
    <subcellularLocation>
        <location evidence="1">Cytoplasm</location>
    </subcellularLocation>
</comment>
<comment type="similarity">
    <text evidence="1">Belongs to the acyl-CoA dehydrogenase family.</text>
</comment>
<protein>
    <recommendedName>
        <fullName evidence="1">Crotonobetainyl-CoA reductase</fullName>
        <ecNumber evidence="1">1.3.8.13</ecNumber>
    </recommendedName>
    <alternativeName>
        <fullName evidence="1">Crotonobetainyl-CoA dehydrogenase</fullName>
    </alternativeName>
</protein>
<dbReference type="EC" id="1.3.8.13" evidence="1"/>
<dbReference type="EMBL" id="AE014075">
    <property type="protein sequence ID" value="AAN78546.1"/>
    <property type="molecule type" value="Genomic_DNA"/>
</dbReference>
<dbReference type="RefSeq" id="WP_000347117.1">
    <property type="nucleotide sequence ID" value="NZ_CP051263.1"/>
</dbReference>
<dbReference type="SMR" id="P60585"/>
<dbReference type="STRING" id="199310.c0048"/>
<dbReference type="GeneID" id="93777396"/>
<dbReference type="KEGG" id="ecc:c0048"/>
<dbReference type="eggNOG" id="COG1960">
    <property type="taxonomic scope" value="Bacteria"/>
</dbReference>
<dbReference type="HOGENOM" id="CLU_018204_0_2_6"/>
<dbReference type="BioCyc" id="ECOL199310:C0048-MONOMER"/>
<dbReference type="UniPathway" id="UPA00117"/>
<dbReference type="Proteomes" id="UP000001410">
    <property type="component" value="Chromosome"/>
</dbReference>
<dbReference type="GO" id="GO:0005737">
    <property type="term" value="C:cytoplasm"/>
    <property type="evidence" value="ECO:0007669"/>
    <property type="project" value="UniProtKB-SubCell"/>
</dbReference>
<dbReference type="GO" id="GO:0003995">
    <property type="term" value="F:acyl-CoA dehydrogenase activity"/>
    <property type="evidence" value="ECO:0007669"/>
    <property type="project" value="InterPro"/>
</dbReference>
<dbReference type="GO" id="GO:0050660">
    <property type="term" value="F:flavin adenine dinucleotide binding"/>
    <property type="evidence" value="ECO:0007669"/>
    <property type="project" value="InterPro"/>
</dbReference>
<dbReference type="GO" id="GO:0009437">
    <property type="term" value="P:carnitine metabolic process"/>
    <property type="evidence" value="ECO:0007669"/>
    <property type="project" value="UniProtKB-UniRule"/>
</dbReference>
<dbReference type="CDD" id="cd00567">
    <property type="entry name" value="ACAD"/>
    <property type="match status" value="1"/>
</dbReference>
<dbReference type="FunFam" id="1.20.140.10:FF:000001">
    <property type="entry name" value="Acyl-CoA dehydrogenase"/>
    <property type="match status" value="1"/>
</dbReference>
<dbReference type="FunFam" id="2.40.110.10:FF:000002">
    <property type="entry name" value="Acyl-CoA dehydrogenase fadE12"/>
    <property type="match status" value="1"/>
</dbReference>
<dbReference type="FunFam" id="1.10.540.10:FF:000005">
    <property type="entry name" value="Crotonobetainyl-CoA reductase"/>
    <property type="match status" value="1"/>
</dbReference>
<dbReference type="Gene3D" id="1.10.540.10">
    <property type="entry name" value="Acyl-CoA dehydrogenase/oxidase, N-terminal domain"/>
    <property type="match status" value="1"/>
</dbReference>
<dbReference type="Gene3D" id="2.40.110.10">
    <property type="entry name" value="Butyryl-CoA Dehydrogenase, subunit A, domain 2"/>
    <property type="match status" value="1"/>
</dbReference>
<dbReference type="Gene3D" id="1.20.140.10">
    <property type="entry name" value="Butyryl-CoA Dehydrogenase, subunit A, domain 3"/>
    <property type="match status" value="1"/>
</dbReference>
<dbReference type="HAMAP" id="MF_01052">
    <property type="entry name" value="CaiA"/>
    <property type="match status" value="1"/>
</dbReference>
<dbReference type="InterPro" id="IPR006089">
    <property type="entry name" value="Acyl-CoA_DH_CS"/>
</dbReference>
<dbReference type="InterPro" id="IPR006091">
    <property type="entry name" value="Acyl-CoA_Oxase/DH_mid-dom"/>
</dbReference>
<dbReference type="InterPro" id="IPR046373">
    <property type="entry name" value="Acyl-CoA_Oxase/DH_mid-dom_sf"/>
</dbReference>
<dbReference type="InterPro" id="IPR036250">
    <property type="entry name" value="AcylCo_DH-like_C"/>
</dbReference>
<dbReference type="InterPro" id="IPR009075">
    <property type="entry name" value="AcylCo_DH/oxidase_C"/>
</dbReference>
<dbReference type="InterPro" id="IPR013786">
    <property type="entry name" value="AcylCoA_DH/ox_N"/>
</dbReference>
<dbReference type="InterPro" id="IPR037069">
    <property type="entry name" value="AcylCoA_DH/ox_N_sf"/>
</dbReference>
<dbReference type="InterPro" id="IPR009100">
    <property type="entry name" value="AcylCoA_DH/oxidase_NM_dom_sf"/>
</dbReference>
<dbReference type="InterPro" id="IPR023450">
    <property type="entry name" value="CaiA"/>
</dbReference>
<dbReference type="NCBIfam" id="NF002885">
    <property type="entry name" value="PRK03354.1"/>
    <property type="match status" value="1"/>
</dbReference>
<dbReference type="PANTHER" id="PTHR43884">
    <property type="entry name" value="ACYL-COA DEHYDROGENASE"/>
    <property type="match status" value="1"/>
</dbReference>
<dbReference type="PANTHER" id="PTHR43884:SF12">
    <property type="entry name" value="ISOVALERYL-COA DEHYDROGENASE, MITOCHONDRIAL-RELATED"/>
    <property type="match status" value="1"/>
</dbReference>
<dbReference type="Pfam" id="PF00441">
    <property type="entry name" value="Acyl-CoA_dh_1"/>
    <property type="match status" value="1"/>
</dbReference>
<dbReference type="Pfam" id="PF02770">
    <property type="entry name" value="Acyl-CoA_dh_M"/>
    <property type="match status" value="1"/>
</dbReference>
<dbReference type="Pfam" id="PF02771">
    <property type="entry name" value="Acyl-CoA_dh_N"/>
    <property type="match status" value="1"/>
</dbReference>
<dbReference type="PIRSF" id="PIRSF016578">
    <property type="entry name" value="HsaA"/>
    <property type="match status" value="1"/>
</dbReference>
<dbReference type="SUPFAM" id="SSF47203">
    <property type="entry name" value="Acyl-CoA dehydrogenase C-terminal domain-like"/>
    <property type="match status" value="1"/>
</dbReference>
<dbReference type="SUPFAM" id="SSF56645">
    <property type="entry name" value="Acyl-CoA dehydrogenase NM domain-like"/>
    <property type="match status" value="1"/>
</dbReference>
<dbReference type="PROSITE" id="PS00072">
    <property type="entry name" value="ACYL_COA_DH_1"/>
    <property type="match status" value="1"/>
</dbReference>
<dbReference type="PROSITE" id="PS00073">
    <property type="entry name" value="ACYL_COA_DH_2"/>
    <property type="match status" value="1"/>
</dbReference>
<accession>P60585</accession>
<accession>P31571</accession>
<organism>
    <name type="scientific">Escherichia coli O6:H1 (strain CFT073 / ATCC 700928 / UPEC)</name>
    <dbReference type="NCBI Taxonomy" id="199310"/>
    <lineage>
        <taxon>Bacteria</taxon>
        <taxon>Pseudomonadati</taxon>
        <taxon>Pseudomonadota</taxon>
        <taxon>Gammaproteobacteria</taxon>
        <taxon>Enterobacterales</taxon>
        <taxon>Enterobacteriaceae</taxon>
        <taxon>Escherichia</taxon>
    </lineage>
</organism>
<proteinExistence type="inferred from homology"/>